<dbReference type="EMBL" id="U00006">
    <property type="protein sequence ID" value="AAC43160.1"/>
    <property type="molecule type" value="Genomic_DNA"/>
</dbReference>
<dbReference type="EMBL" id="U00096">
    <property type="protein sequence ID" value="AAC77036.1"/>
    <property type="molecule type" value="Genomic_DNA"/>
</dbReference>
<dbReference type="EMBL" id="AP009048">
    <property type="protein sequence ID" value="BAE78068.1"/>
    <property type="molecule type" value="Genomic_DNA"/>
</dbReference>
<dbReference type="PIR" id="A65215">
    <property type="entry name" value="A65215"/>
</dbReference>
<dbReference type="RefSeq" id="NP_418490.1">
    <property type="nucleotide sequence ID" value="NC_000913.3"/>
</dbReference>
<dbReference type="SMR" id="P32704"/>
<dbReference type="BioGRID" id="4259654">
    <property type="interactions" value="20"/>
</dbReference>
<dbReference type="DIP" id="DIP-12551N"/>
<dbReference type="FunCoup" id="P32704">
    <property type="interactions" value="32"/>
</dbReference>
<dbReference type="IntAct" id="P32704">
    <property type="interactions" value="5"/>
</dbReference>
<dbReference type="STRING" id="511145.b4066"/>
<dbReference type="PaxDb" id="511145-b4066"/>
<dbReference type="EnsemblBacteria" id="AAC77036">
    <property type="protein sequence ID" value="AAC77036"/>
    <property type="gene ID" value="b4066"/>
</dbReference>
<dbReference type="GeneID" id="948576"/>
<dbReference type="KEGG" id="ecj:JW4027"/>
<dbReference type="KEGG" id="eco:b4066"/>
<dbReference type="PATRIC" id="fig|511145.12.peg.4189"/>
<dbReference type="EchoBASE" id="EB1885"/>
<dbReference type="eggNOG" id="COG1357">
    <property type="taxonomic scope" value="Bacteria"/>
</dbReference>
<dbReference type="HOGENOM" id="CLU_065114_0_0_6"/>
<dbReference type="InParanoid" id="P32704"/>
<dbReference type="OMA" id="PLCQINN"/>
<dbReference type="PhylomeDB" id="P32704"/>
<dbReference type="BioCyc" id="EcoCyc:EG11941-MONOMER"/>
<dbReference type="PRO" id="PR:P32704"/>
<dbReference type="Proteomes" id="UP000000625">
    <property type="component" value="Chromosome"/>
</dbReference>
<dbReference type="Gene3D" id="2.160.20.80">
    <property type="entry name" value="E3 ubiquitin-protein ligase SopA"/>
    <property type="match status" value="2"/>
</dbReference>
<dbReference type="InterPro" id="IPR001646">
    <property type="entry name" value="5peptide_repeat"/>
</dbReference>
<dbReference type="InterPro" id="IPR051082">
    <property type="entry name" value="Pentapeptide-BTB/POZ_domain"/>
</dbReference>
<dbReference type="PANTHER" id="PTHR14136">
    <property type="entry name" value="BTB_POZ DOMAIN-CONTAINING PROTEIN KCTD9"/>
    <property type="match status" value="1"/>
</dbReference>
<dbReference type="PANTHER" id="PTHR14136:SF17">
    <property type="entry name" value="BTB_POZ DOMAIN-CONTAINING PROTEIN KCTD9"/>
    <property type="match status" value="1"/>
</dbReference>
<dbReference type="Pfam" id="PF00805">
    <property type="entry name" value="Pentapeptide"/>
    <property type="match status" value="3"/>
</dbReference>
<dbReference type="SUPFAM" id="SSF141571">
    <property type="entry name" value="Pentapeptide repeat-like"/>
    <property type="match status" value="2"/>
</dbReference>
<feature type="chain" id="PRO_0000169723" description="Uncharacterized protein YjcF">
    <location>
        <begin position="1"/>
        <end position="430"/>
    </location>
</feature>
<gene>
    <name type="primary">yjcF</name>
    <name type="ordered locus">b4066</name>
    <name type="ordered locus">JW4027</name>
</gene>
<organism>
    <name type="scientific">Escherichia coli (strain K12)</name>
    <dbReference type="NCBI Taxonomy" id="83333"/>
    <lineage>
        <taxon>Bacteria</taxon>
        <taxon>Pseudomonadati</taxon>
        <taxon>Pseudomonadota</taxon>
        <taxon>Gammaproteobacteria</taxon>
        <taxon>Enterobacterales</taxon>
        <taxon>Enterobacteriaceae</taxon>
        <taxon>Escherichia</taxon>
    </lineage>
</organism>
<proteinExistence type="predicted"/>
<name>YJCF_ECOLI</name>
<reference key="1">
    <citation type="journal article" date="1993" name="Nucleic Acids Res.">
        <title>Analysis of the Escherichia coli genome. IV. DNA sequence of the region from 89.2 to 92.8 minutes.</title>
        <authorList>
            <person name="Blattner F.R."/>
            <person name="Burland V.D."/>
            <person name="Plunkett G. III"/>
            <person name="Sofia H.J."/>
            <person name="Daniels D.L."/>
        </authorList>
    </citation>
    <scope>NUCLEOTIDE SEQUENCE [LARGE SCALE GENOMIC DNA]</scope>
    <source>
        <strain>K12 / MG1655 / ATCC 47076</strain>
    </source>
</reference>
<reference key="2">
    <citation type="journal article" date="1997" name="Science">
        <title>The complete genome sequence of Escherichia coli K-12.</title>
        <authorList>
            <person name="Blattner F.R."/>
            <person name="Plunkett G. III"/>
            <person name="Bloch C.A."/>
            <person name="Perna N.T."/>
            <person name="Burland V."/>
            <person name="Riley M."/>
            <person name="Collado-Vides J."/>
            <person name="Glasner J.D."/>
            <person name="Rode C.K."/>
            <person name="Mayhew G.F."/>
            <person name="Gregor J."/>
            <person name="Davis N.W."/>
            <person name="Kirkpatrick H.A."/>
            <person name="Goeden M.A."/>
            <person name="Rose D.J."/>
            <person name="Mau B."/>
            <person name="Shao Y."/>
        </authorList>
    </citation>
    <scope>NUCLEOTIDE SEQUENCE [LARGE SCALE GENOMIC DNA]</scope>
    <source>
        <strain>K12 / MG1655 / ATCC 47076</strain>
    </source>
</reference>
<reference key="3">
    <citation type="journal article" date="2006" name="Mol. Syst. Biol.">
        <title>Highly accurate genome sequences of Escherichia coli K-12 strains MG1655 and W3110.</title>
        <authorList>
            <person name="Hayashi K."/>
            <person name="Morooka N."/>
            <person name="Yamamoto Y."/>
            <person name="Fujita K."/>
            <person name="Isono K."/>
            <person name="Choi S."/>
            <person name="Ohtsubo E."/>
            <person name="Baba T."/>
            <person name="Wanner B.L."/>
            <person name="Mori H."/>
            <person name="Horiuchi T."/>
        </authorList>
    </citation>
    <scope>NUCLEOTIDE SEQUENCE [LARGE SCALE GENOMIC DNA]</scope>
    <source>
        <strain>K12 / W3110 / ATCC 27325 / DSM 5911</strain>
    </source>
</reference>
<accession>P32704</accession>
<accession>Q2M6N8</accession>
<sequence length="430" mass="49378">MRYNGLNNMFFPLCLINDNHSVTSPSHTKKTKSDNYSKHHKNTLIDNKALSLFKMDDHEKVIGLIQKMKRIYDSLPSGKITKETDRKIHKYFIDIASHANNKCDDRITRRVYLNKDKEVSIKVVYFINNVTVHNNTIEIPQTVNGGYDFSHLSLKGIVIKDEDLSNSNFAGCRLQNAIFQDCNMYKTNFNFAIMEKILFDNCILDDSNFAQIKMTDGTLNSCSAMHVQFYNATMNRANIKNTFLDYSNFYMAYMAEVNLYKVIAPYINLFRADLSFSKLDLINFEHADLSRVNLNKATLQNINLIDSKLFFTRLTNTFLEMVICTDSNMANVNFNNANLSNCHFNCSVLTKAWMFNIRLYRVNFDEASVQGMGITILRGEENISINSDILVTLQKFFEEDCATHTGMSQTEDNLHAVAMKITADIMQDAD</sequence>
<keyword id="KW-1185">Reference proteome</keyword>
<protein>
    <recommendedName>
        <fullName>Uncharacterized protein YjcF</fullName>
    </recommendedName>
</protein>